<reference evidence="5" key="1">
    <citation type="journal article" date="1998" name="Science">
        <title>Genome sequence of the nematode C. elegans: a platform for investigating biology.</title>
        <authorList>
            <consortium name="The C. elegans sequencing consortium"/>
        </authorList>
    </citation>
    <scope>NUCLEOTIDE SEQUENCE [LARGE SCALE GENOMIC DNA]</scope>
    <source>
        <strain evidence="5">Bristol N2</strain>
    </source>
</reference>
<reference evidence="4" key="2">
    <citation type="journal article" date="2012" name="Cell Biosci.">
        <title>C. elegans PAT-9 is a nuclear zinc finger protein critical for the assembly of muscle attachments.</title>
        <authorList>
            <person name="Liu Q."/>
            <person name="Jones T.I."/>
            <person name="Bachmann R.A."/>
            <person name="Meghpara M."/>
            <person name="Rogowski L."/>
            <person name="Williams B.D."/>
            <person name="Jones P.L."/>
        </authorList>
    </citation>
    <scope>FUNCTION</scope>
    <scope>SUBCELLULAR LOCATION</scope>
    <scope>DEVELOPMENTAL STAGE</scope>
    <scope>DISRUPTION PHENOTYPE</scope>
</reference>
<feature type="chain" id="PRO_0000454143" description="Zinc finger protein pat-9">
    <location>
        <begin position="1"/>
        <end position="470"/>
    </location>
</feature>
<feature type="zinc finger region" description="C2H2-type 1" evidence="1">
    <location>
        <begin position="84"/>
        <end position="106"/>
    </location>
</feature>
<feature type="zinc finger region" description="C2H2-type 2" evidence="1">
    <location>
        <begin position="112"/>
        <end position="134"/>
    </location>
</feature>
<feature type="zinc finger region" description="C2H2-type 3" evidence="1">
    <location>
        <begin position="140"/>
        <end position="162"/>
    </location>
</feature>
<feature type="region of interest" description="Disordered" evidence="2">
    <location>
        <begin position="1"/>
        <end position="25"/>
    </location>
</feature>
<feature type="region of interest" description="Disordered" evidence="2">
    <location>
        <begin position="191"/>
        <end position="235"/>
    </location>
</feature>
<feature type="short sequence motif" description="Nuclear localization signal" evidence="3">
    <location>
        <begin position="221"/>
        <end position="230"/>
    </location>
</feature>
<dbReference type="EMBL" id="BX284606">
    <property type="protein sequence ID" value="CCD72790.1"/>
    <property type="molecule type" value="Genomic_DNA"/>
</dbReference>
<dbReference type="PIR" id="T34392">
    <property type="entry name" value="T34392"/>
</dbReference>
<dbReference type="RefSeq" id="NP_510680.2">
    <property type="nucleotide sequence ID" value="NM_078279.7"/>
</dbReference>
<dbReference type="SMR" id="Q22829"/>
<dbReference type="FunCoup" id="Q22829">
    <property type="interactions" value="428"/>
</dbReference>
<dbReference type="IntAct" id="Q22829">
    <property type="interactions" value="2"/>
</dbReference>
<dbReference type="STRING" id="6239.T27B1.2.1"/>
<dbReference type="PaxDb" id="6239-T27B1.2"/>
<dbReference type="PeptideAtlas" id="Q22829"/>
<dbReference type="EnsemblMetazoa" id="T27B1.2a.1">
    <property type="protein sequence ID" value="T27B1.2a.1"/>
    <property type="gene ID" value="WBGene00003933"/>
</dbReference>
<dbReference type="GeneID" id="181714"/>
<dbReference type="KEGG" id="cel:CELE_T27B1.2"/>
<dbReference type="UCSC" id="T27B1.2.1">
    <property type="organism name" value="c. elegans"/>
</dbReference>
<dbReference type="AGR" id="WB:WBGene00003933"/>
<dbReference type="CTD" id="181714"/>
<dbReference type="WormBase" id="T27B1.2a">
    <property type="protein sequence ID" value="CE38558"/>
    <property type="gene ID" value="WBGene00003933"/>
    <property type="gene designation" value="pat-9"/>
</dbReference>
<dbReference type="eggNOG" id="KOG1721">
    <property type="taxonomic scope" value="Eukaryota"/>
</dbReference>
<dbReference type="GeneTree" id="ENSGT00940000169555"/>
<dbReference type="HOGENOM" id="CLU_565297_0_0_1"/>
<dbReference type="InParanoid" id="Q22829"/>
<dbReference type="OMA" id="CNARFNR"/>
<dbReference type="OrthoDB" id="6077919at2759"/>
<dbReference type="PhylomeDB" id="Q22829"/>
<dbReference type="PRO" id="PR:Q22829"/>
<dbReference type="Proteomes" id="UP000001940">
    <property type="component" value="Chromosome X"/>
</dbReference>
<dbReference type="Bgee" id="WBGene00003933">
    <property type="expression patterns" value="Expressed in embryo and 3 other cell types or tissues"/>
</dbReference>
<dbReference type="GO" id="GO:0005694">
    <property type="term" value="C:chromosome"/>
    <property type="evidence" value="ECO:0000318"/>
    <property type="project" value="GO_Central"/>
</dbReference>
<dbReference type="GO" id="GO:0005634">
    <property type="term" value="C:nucleus"/>
    <property type="evidence" value="ECO:0000314"/>
    <property type="project" value="WormBase"/>
</dbReference>
<dbReference type="GO" id="GO:0043035">
    <property type="term" value="F:chromatin insulator sequence binding"/>
    <property type="evidence" value="ECO:0000318"/>
    <property type="project" value="GO_Central"/>
</dbReference>
<dbReference type="GO" id="GO:0008270">
    <property type="term" value="F:zinc ion binding"/>
    <property type="evidence" value="ECO:0007669"/>
    <property type="project" value="UniProtKB-KW"/>
</dbReference>
<dbReference type="GO" id="GO:0051153">
    <property type="term" value="P:regulation of striated muscle cell differentiation"/>
    <property type="evidence" value="ECO:0000315"/>
    <property type="project" value="WormBase"/>
</dbReference>
<dbReference type="GO" id="GO:0006357">
    <property type="term" value="P:regulation of transcription by RNA polymerase II"/>
    <property type="evidence" value="ECO:0000318"/>
    <property type="project" value="GO_Central"/>
</dbReference>
<dbReference type="FunFam" id="3.30.160.60:FF:001666">
    <property type="entry name" value="MDS1 and EVI1 complex locus"/>
    <property type="match status" value="1"/>
</dbReference>
<dbReference type="FunFam" id="3.30.160.60:FF:001729">
    <property type="entry name" value="Zinc finger protein 337"/>
    <property type="match status" value="1"/>
</dbReference>
<dbReference type="Gene3D" id="3.30.160.60">
    <property type="entry name" value="Classic Zinc Finger"/>
    <property type="match status" value="3"/>
</dbReference>
<dbReference type="InterPro" id="IPR036236">
    <property type="entry name" value="Znf_C2H2_sf"/>
</dbReference>
<dbReference type="InterPro" id="IPR013087">
    <property type="entry name" value="Znf_C2H2_type"/>
</dbReference>
<dbReference type="PANTHER" id="PTHR23226:SF416">
    <property type="entry name" value="FI01424P"/>
    <property type="match status" value="1"/>
</dbReference>
<dbReference type="PANTHER" id="PTHR23226">
    <property type="entry name" value="ZINC FINGER AND SCAN DOMAIN-CONTAINING"/>
    <property type="match status" value="1"/>
</dbReference>
<dbReference type="Pfam" id="PF00096">
    <property type="entry name" value="zf-C2H2"/>
    <property type="match status" value="1"/>
</dbReference>
<dbReference type="SMART" id="SM00355">
    <property type="entry name" value="ZnF_C2H2"/>
    <property type="match status" value="3"/>
</dbReference>
<dbReference type="SUPFAM" id="SSF57667">
    <property type="entry name" value="beta-beta-alpha zinc fingers"/>
    <property type="match status" value="2"/>
</dbReference>
<dbReference type="PROSITE" id="PS00028">
    <property type="entry name" value="ZINC_FINGER_C2H2_1"/>
    <property type="match status" value="3"/>
</dbReference>
<dbReference type="PROSITE" id="PS50157">
    <property type="entry name" value="ZINC_FINGER_C2H2_2"/>
    <property type="match status" value="3"/>
</dbReference>
<gene>
    <name evidence="6" type="primary">pat-9</name>
    <name evidence="6" type="synonym">ztf-19</name>
    <name evidence="6" type="ORF">T27B1.2</name>
</gene>
<comment type="function">
    <text evidence="3">Probable transcription factor; required for proper organization of muscle myofilaments and for their recruitment to the M line.</text>
</comment>
<comment type="subcellular location">
    <subcellularLocation>
        <location evidence="3">Nucleus</location>
    </subcellularLocation>
    <subcellularLocation>
        <location evidence="3">Chromosome</location>
    </subcellularLocation>
</comment>
<comment type="tissue specificity">
    <text evidence="3">Expressed in body wall muscle and gonad (at protein level).</text>
</comment>
<comment type="developmental stage">
    <text evidence="3">Expressed from early embryogenesis and throughout all developmental stages (at protein level) (PubMed:22616817). Expressed in body wall muscle in embryos, young larvae and adults (at protein level) (PubMed:22616817).</text>
</comment>
<comment type="disruption phenotype">
    <text evidence="3">RNAi-mediated knockdown causes paralysis and arrested elongation at the two-fold stage of embryonic development.</text>
</comment>
<comment type="similarity">
    <text evidence="4">Belongs to the krueppel C2H2-type zinc-finger protein family.</text>
</comment>
<sequence length="470" mass="52437">MENRTPMQHHSGYEIVKSEPPSTPKTLIKSSYMENTPEMVFGSFPIHSGFCTQVVTHTDPMNNNNQPKTNANGRALAADRKRPYPCNLCSSKFGSKMELEEHQNSHTGQKPFECDTCNARFNRRSTLWNHKRIHSDAKPFVCTVCQMTFKWKNSLKCHKDMHQRKNETSAHLDNDLRQLTYATAAKRKLQMEQEENGGLPASSSASSVISHPLITTTSGNKKRSKAAKAKQTPSSLATTLSQVHLGAVQPLHASALVPPSDHQIDLDTTSLDSLMQSQNQNFLMQLYGYSDDGRHNGGMLSLDDTMLSNLSDSKSDSGSSSGGLSIQLPMQTINMLNFRNLGTQQLPPVHQLASSLPSVSSGMDYVNVNQHDSHYIVSQPDMMLGNQPLYHNGSFANIEKSNPHNNQFTIDSCVLLPSSRQDYPFDYTMVNQQYPMQEQVHDQTVGVSVVQQHYAEQAHAHGKTVPHEQW</sequence>
<keyword id="KW-0158">Chromosome</keyword>
<keyword id="KW-0479">Metal-binding</keyword>
<keyword id="KW-0539">Nucleus</keyword>
<keyword id="KW-1185">Reference proteome</keyword>
<keyword id="KW-0677">Repeat</keyword>
<keyword id="KW-0862">Zinc</keyword>
<keyword id="KW-0863">Zinc-finger</keyword>
<name>PAT9_CAEEL</name>
<evidence type="ECO:0000255" key="1">
    <source>
        <dbReference type="PROSITE-ProRule" id="PRU00042"/>
    </source>
</evidence>
<evidence type="ECO:0000256" key="2">
    <source>
        <dbReference type="SAM" id="MobiDB-lite"/>
    </source>
</evidence>
<evidence type="ECO:0000269" key="3">
    <source>
    </source>
</evidence>
<evidence type="ECO:0000305" key="4"/>
<evidence type="ECO:0000312" key="5">
    <source>
        <dbReference type="Proteomes" id="UP000001940"/>
    </source>
</evidence>
<evidence type="ECO:0000312" key="6">
    <source>
        <dbReference type="WormBase" id="T27B1.2a"/>
    </source>
</evidence>
<protein>
    <recommendedName>
        <fullName evidence="4">Zinc finger protein pat-9</fullName>
    </recommendedName>
    <alternativeName>
        <fullName evidence="6">Paralyzed arrest at two-fold pat-9</fullName>
    </alternativeName>
</protein>
<accession>Q22829</accession>
<proteinExistence type="evidence at protein level"/>
<organism evidence="5">
    <name type="scientific">Caenorhabditis elegans</name>
    <dbReference type="NCBI Taxonomy" id="6239"/>
    <lineage>
        <taxon>Eukaryota</taxon>
        <taxon>Metazoa</taxon>
        <taxon>Ecdysozoa</taxon>
        <taxon>Nematoda</taxon>
        <taxon>Chromadorea</taxon>
        <taxon>Rhabditida</taxon>
        <taxon>Rhabditina</taxon>
        <taxon>Rhabditomorpha</taxon>
        <taxon>Rhabditoidea</taxon>
        <taxon>Rhabditidae</taxon>
        <taxon>Peloderinae</taxon>
        <taxon>Caenorhabditis</taxon>
    </lineage>
</organism>